<comment type="function">
    <text evidence="1">Responsible for the release of ribosomes from messenger RNA at the termination of protein biosynthesis. May increase the efficiency of translation by recycling ribosomes from one round of translation to another.</text>
</comment>
<comment type="subcellular location">
    <subcellularLocation>
        <location evidence="1">Cytoplasm</location>
    </subcellularLocation>
</comment>
<comment type="similarity">
    <text evidence="1">Belongs to the RRF family.</text>
</comment>
<reference key="1">
    <citation type="journal article" date="1996" name="Nucleic Acids Res.">
        <title>Complete sequence analysis of the genome of the bacterium Mycoplasma pneumoniae.</title>
        <authorList>
            <person name="Himmelreich R."/>
            <person name="Hilbert H."/>
            <person name="Plagens H."/>
            <person name="Pirkl E."/>
            <person name="Li B.-C."/>
            <person name="Herrmann R."/>
        </authorList>
    </citation>
    <scope>NUCLEOTIDE SEQUENCE [LARGE SCALE GENOMIC DNA]</scope>
    <source>
        <strain>ATCC 29342 / M129 / Subtype 1</strain>
    </source>
</reference>
<keyword id="KW-0002">3D-structure</keyword>
<keyword id="KW-0963">Cytoplasm</keyword>
<keyword id="KW-0648">Protein biosynthesis</keyword>
<keyword id="KW-1185">Reference proteome</keyword>
<organism>
    <name type="scientific">Mycoplasma pneumoniae (strain ATCC 29342 / M129 / Subtype 1)</name>
    <name type="common">Mycoplasmoides pneumoniae</name>
    <dbReference type="NCBI Taxonomy" id="272634"/>
    <lineage>
        <taxon>Bacteria</taxon>
        <taxon>Bacillati</taxon>
        <taxon>Mycoplasmatota</taxon>
        <taxon>Mycoplasmoidales</taxon>
        <taxon>Mycoplasmoidaceae</taxon>
        <taxon>Mycoplasmoides</taxon>
    </lineage>
</organism>
<accession>P75161</accession>
<feature type="chain" id="PRO_0000167498" description="Ribosome-recycling factor">
    <location>
        <begin position="1"/>
        <end position="184"/>
    </location>
</feature>
<dbReference type="EMBL" id="U00089">
    <property type="protein sequence ID" value="AAB95854.1"/>
    <property type="molecule type" value="Genomic_DNA"/>
</dbReference>
<dbReference type="PIR" id="S73532">
    <property type="entry name" value="S73532"/>
</dbReference>
<dbReference type="RefSeq" id="NP_110325.1">
    <property type="nucleotide sequence ID" value="NC_000912.1"/>
</dbReference>
<dbReference type="RefSeq" id="WP_010874993.1">
    <property type="nucleotide sequence ID" value="NZ_OU342337.1"/>
</dbReference>
<dbReference type="PDB" id="7PAU">
    <property type="method" value="EM"/>
    <property type="resolution" value="8.30 A"/>
    <property type="chains" value="7=1-184"/>
</dbReference>
<dbReference type="PDBsum" id="7PAU"/>
<dbReference type="EMDB" id="EMD-13286"/>
<dbReference type="SMR" id="P75161"/>
<dbReference type="IntAct" id="P75161">
    <property type="interactions" value="1"/>
</dbReference>
<dbReference type="STRING" id="272634.MPN_636"/>
<dbReference type="EnsemblBacteria" id="AAB95854">
    <property type="protein sequence ID" value="AAB95854"/>
    <property type="gene ID" value="MPN_636"/>
</dbReference>
<dbReference type="KEGG" id="mpn:MPN_636"/>
<dbReference type="PATRIC" id="fig|272634.6.peg.699"/>
<dbReference type="HOGENOM" id="CLU_073981_2_0_14"/>
<dbReference type="OrthoDB" id="9804006at2"/>
<dbReference type="BioCyc" id="MPNE272634:G1GJ3-1019-MONOMER"/>
<dbReference type="Proteomes" id="UP000000808">
    <property type="component" value="Chromosome"/>
</dbReference>
<dbReference type="GO" id="GO:0005737">
    <property type="term" value="C:cytoplasm"/>
    <property type="evidence" value="ECO:0007669"/>
    <property type="project" value="UniProtKB-SubCell"/>
</dbReference>
<dbReference type="GO" id="GO:0043023">
    <property type="term" value="F:ribosomal large subunit binding"/>
    <property type="evidence" value="ECO:0007669"/>
    <property type="project" value="TreeGrafter"/>
</dbReference>
<dbReference type="GO" id="GO:0006415">
    <property type="term" value="P:translational termination"/>
    <property type="evidence" value="ECO:0007669"/>
    <property type="project" value="UniProtKB-UniRule"/>
</dbReference>
<dbReference type="CDD" id="cd00520">
    <property type="entry name" value="RRF"/>
    <property type="match status" value="1"/>
</dbReference>
<dbReference type="FunFam" id="3.30.1360.40:FF:000001">
    <property type="entry name" value="Ribosome-recycling factor"/>
    <property type="match status" value="1"/>
</dbReference>
<dbReference type="Gene3D" id="3.30.1360.40">
    <property type="match status" value="1"/>
</dbReference>
<dbReference type="Gene3D" id="1.10.132.20">
    <property type="entry name" value="Ribosome-recycling factor"/>
    <property type="match status" value="1"/>
</dbReference>
<dbReference type="HAMAP" id="MF_00040">
    <property type="entry name" value="RRF"/>
    <property type="match status" value="1"/>
</dbReference>
<dbReference type="InterPro" id="IPR002661">
    <property type="entry name" value="Ribosome_recyc_fac"/>
</dbReference>
<dbReference type="InterPro" id="IPR023584">
    <property type="entry name" value="Ribosome_recyc_fac_dom"/>
</dbReference>
<dbReference type="InterPro" id="IPR036191">
    <property type="entry name" value="RRF_sf"/>
</dbReference>
<dbReference type="NCBIfam" id="TIGR00496">
    <property type="entry name" value="frr"/>
    <property type="match status" value="1"/>
</dbReference>
<dbReference type="PANTHER" id="PTHR20982:SF3">
    <property type="entry name" value="MITOCHONDRIAL RIBOSOME RECYCLING FACTOR PSEUDO 1"/>
    <property type="match status" value="1"/>
</dbReference>
<dbReference type="PANTHER" id="PTHR20982">
    <property type="entry name" value="RIBOSOME RECYCLING FACTOR"/>
    <property type="match status" value="1"/>
</dbReference>
<dbReference type="Pfam" id="PF01765">
    <property type="entry name" value="RRF"/>
    <property type="match status" value="1"/>
</dbReference>
<dbReference type="SUPFAM" id="SSF55194">
    <property type="entry name" value="Ribosome recycling factor, RRF"/>
    <property type="match status" value="1"/>
</dbReference>
<gene>
    <name evidence="1" type="primary">frr</name>
    <name type="ordered locus">MPN_636</name>
    <name type="ORF">MP206</name>
</gene>
<evidence type="ECO:0000255" key="1">
    <source>
        <dbReference type="HAMAP-Rule" id="MF_00040"/>
    </source>
</evidence>
<name>RRF_MYCPN</name>
<protein>
    <recommendedName>
        <fullName evidence="1">Ribosome-recycling factor</fullName>
        <shortName evidence="1">RRF</shortName>
    </recommendedName>
    <alternativeName>
        <fullName evidence="1">Ribosome-releasing factor</fullName>
    </alternativeName>
</protein>
<sequence>MSPEKYLNFFKETADKKFQWLKEELSKIRTGRPNPKLFDNLLVESYGDRMPMVALAQIAVNPPREIVIKPFDVKNNINAIYSEIQRANLGVQPVIDGDKIRINFPPMTQESRLESIKQAKKVVEQIHQELRSVRRDTLQMIKKDDHKDEDFEEFLKEEVEKVNKQYIAQLETIQKQKEKELLVV</sequence>
<proteinExistence type="evidence at protein level"/>